<reference key="1">
    <citation type="journal article" date="2005" name="Science">
        <title>The transcriptional landscape of the mammalian genome.</title>
        <authorList>
            <person name="Carninci P."/>
            <person name="Kasukawa T."/>
            <person name="Katayama S."/>
            <person name="Gough J."/>
            <person name="Frith M.C."/>
            <person name="Maeda N."/>
            <person name="Oyama R."/>
            <person name="Ravasi T."/>
            <person name="Lenhard B."/>
            <person name="Wells C."/>
            <person name="Kodzius R."/>
            <person name="Shimokawa K."/>
            <person name="Bajic V.B."/>
            <person name="Brenner S.E."/>
            <person name="Batalov S."/>
            <person name="Forrest A.R."/>
            <person name="Zavolan M."/>
            <person name="Davis M.J."/>
            <person name="Wilming L.G."/>
            <person name="Aidinis V."/>
            <person name="Allen J.E."/>
            <person name="Ambesi-Impiombato A."/>
            <person name="Apweiler R."/>
            <person name="Aturaliya R.N."/>
            <person name="Bailey T.L."/>
            <person name="Bansal M."/>
            <person name="Baxter L."/>
            <person name="Beisel K.W."/>
            <person name="Bersano T."/>
            <person name="Bono H."/>
            <person name="Chalk A.M."/>
            <person name="Chiu K.P."/>
            <person name="Choudhary V."/>
            <person name="Christoffels A."/>
            <person name="Clutterbuck D.R."/>
            <person name="Crowe M.L."/>
            <person name="Dalla E."/>
            <person name="Dalrymple B.P."/>
            <person name="de Bono B."/>
            <person name="Della Gatta G."/>
            <person name="di Bernardo D."/>
            <person name="Down T."/>
            <person name="Engstrom P."/>
            <person name="Fagiolini M."/>
            <person name="Faulkner G."/>
            <person name="Fletcher C.F."/>
            <person name="Fukushima T."/>
            <person name="Furuno M."/>
            <person name="Futaki S."/>
            <person name="Gariboldi M."/>
            <person name="Georgii-Hemming P."/>
            <person name="Gingeras T.R."/>
            <person name="Gojobori T."/>
            <person name="Green R.E."/>
            <person name="Gustincich S."/>
            <person name="Harbers M."/>
            <person name="Hayashi Y."/>
            <person name="Hensch T.K."/>
            <person name="Hirokawa N."/>
            <person name="Hill D."/>
            <person name="Huminiecki L."/>
            <person name="Iacono M."/>
            <person name="Ikeo K."/>
            <person name="Iwama A."/>
            <person name="Ishikawa T."/>
            <person name="Jakt M."/>
            <person name="Kanapin A."/>
            <person name="Katoh M."/>
            <person name="Kawasawa Y."/>
            <person name="Kelso J."/>
            <person name="Kitamura H."/>
            <person name="Kitano H."/>
            <person name="Kollias G."/>
            <person name="Krishnan S.P."/>
            <person name="Kruger A."/>
            <person name="Kummerfeld S.K."/>
            <person name="Kurochkin I.V."/>
            <person name="Lareau L.F."/>
            <person name="Lazarevic D."/>
            <person name="Lipovich L."/>
            <person name="Liu J."/>
            <person name="Liuni S."/>
            <person name="McWilliam S."/>
            <person name="Madan Babu M."/>
            <person name="Madera M."/>
            <person name="Marchionni L."/>
            <person name="Matsuda H."/>
            <person name="Matsuzawa S."/>
            <person name="Miki H."/>
            <person name="Mignone F."/>
            <person name="Miyake S."/>
            <person name="Morris K."/>
            <person name="Mottagui-Tabar S."/>
            <person name="Mulder N."/>
            <person name="Nakano N."/>
            <person name="Nakauchi H."/>
            <person name="Ng P."/>
            <person name="Nilsson R."/>
            <person name="Nishiguchi S."/>
            <person name="Nishikawa S."/>
            <person name="Nori F."/>
            <person name="Ohara O."/>
            <person name="Okazaki Y."/>
            <person name="Orlando V."/>
            <person name="Pang K.C."/>
            <person name="Pavan W.J."/>
            <person name="Pavesi G."/>
            <person name="Pesole G."/>
            <person name="Petrovsky N."/>
            <person name="Piazza S."/>
            <person name="Reed J."/>
            <person name="Reid J.F."/>
            <person name="Ring B.Z."/>
            <person name="Ringwald M."/>
            <person name="Rost B."/>
            <person name="Ruan Y."/>
            <person name="Salzberg S.L."/>
            <person name="Sandelin A."/>
            <person name="Schneider C."/>
            <person name="Schoenbach C."/>
            <person name="Sekiguchi K."/>
            <person name="Semple C.A."/>
            <person name="Seno S."/>
            <person name="Sessa L."/>
            <person name="Sheng Y."/>
            <person name="Shibata Y."/>
            <person name="Shimada H."/>
            <person name="Shimada K."/>
            <person name="Silva D."/>
            <person name="Sinclair B."/>
            <person name="Sperling S."/>
            <person name="Stupka E."/>
            <person name="Sugiura K."/>
            <person name="Sultana R."/>
            <person name="Takenaka Y."/>
            <person name="Taki K."/>
            <person name="Tammoja K."/>
            <person name="Tan S.L."/>
            <person name="Tang S."/>
            <person name="Taylor M.S."/>
            <person name="Tegner J."/>
            <person name="Teichmann S.A."/>
            <person name="Ueda H.R."/>
            <person name="van Nimwegen E."/>
            <person name="Verardo R."/>
            <person name="Wei C.L."/>
            <person name="Yagi K."/>
            <person name="Yamanishi H."/>
            <person name="Zabarovsky E."/>
            <person name="Zhu S."/>
            <person name="Zimmer A."/>
            <person name="Hide W."/>
            <person name="Bult C."/>
            <person name="Grimmond S.M."/>
            <person name="Teasdale R.D."/>
            <person name="Liu E.T."/>
            <person name="Brusic V."/>
            <person name="Quackenbush J."/>
            <person name="Wahlestedt C."/>
            <person name="Mattick J.S."/>
            <person name="Hume D.A."/>
            <person name="Kai C."/>
            <person name="Sasaki D."/>
            <person name="Tomaru Y."/>
            <person name="Fukuda S."/>
            <person name="Kanamori-Katayama M."/>
            <person name="Suzuki M."/>
            <person name="Aoki J."/>
            <person name="Arakawa T."/>
            <person name="Iida J."/>
            <person name="Imamura K."/>
            <person name="Itoh M."/>
            <person name="Kato T."/>
            <person name="Kawaji H."/>
            <person name="Kawagashira N."/>
            <person name="Kawashima T."/>
            <person name="Kojima M."/>
            <person name="Kondo S."/>
            <person name="Konno H."/>
            <person name="Nakano K."/>
            <person name="Ninomiya N."/>
            <person name="Nishio T."/>
            <person name="Okada M."/>
            <person name="Plessy C."/>
            <person name="Shibata K."/>
            <person name="Shiraki T."/>
            <person name="Suzuki S."/>
            <person name="Tagami M."/>
            <person name="Waki K."/>
            <person name="Watahiki A."/>
            <person name="Okamura-Oho Y."/>
            <person name="Suzuki H."/>
            <person name="Kawai J."/>
            <person name="Hayashizaki Y."/>
        </authorList>
    </citation>
    <scope>NUCLEOTIDE SEQUENCE [LARGE SCALE MRNA]</scope>
    <source>
        <strain>C57BL/6J</strain>
        <tissue>Hippocampus</tissue>
    </source>
</reference>
<reference key="2">
    <citation type="journal article" date="2004" name="Genome Res.">
        <title>The status, quality, and expansion of the NIH full-length cDNA project: the Mammalian Gene Collection (MGC).</title>
        <authorList>
            <consortium name="The MGC Project Team"/>
        </authorList>
    </citation>
    <scope>NUCLEOTIDE SEQUENCE [LARGE SCALE MRNA]</scope>
    <source>
        <tissue>Liver</tissue>
    </source>
</reference>
<gene>
    <name evidence="6" type="primary">Zdhhc4</name>
</gene>
<evidence type="ECO:0000250" key="1">
    <source>
        <dbReference type="UniProtKB" id="Q8IUH5"/>
    </source>
</evidence>
<evidence type="ECO:0000250" key="2">
    <source>
        <dbReference type="UniProtKB" id="Q9NPG8"/>
    </source>
</evidence>
<evidence type="ECO:0000255" key="3"/>
<evidence type="ECO:0000255" key="4">
    <source>
        <dbReference type="PROSITE-ProRule" id="PRU00067"/>
    </source>
</evidence>
<evidence type="ECO:0000305" key="5"/>
<evidence type="ECO:0000312" key="6">
    <source>
        <dbReference type="MGI" id="MGI:1920131"/>
    </source>
</evidence>
<dbReference type="EC" id="2.3.1.225" evidence="2"/>
<dbReference type="EMBL" id="AK013609">
    <property type="protein sequence ID" value="BAB28929.1"/>
    <property type="molecule type" value="mRNA"/>
</dbReference>
<dbReference type="EMBL" id="BC019523">
    <property type="protein sequence ID" value="AAH19523.1"/>
    <property type="molecule type" value="mRNA"/>
</dbReference>
<dbReference type="EMBL" id="BC022770">
    <property type="protein sequence ID" value="AAH22770.1"/>
    <property type="molecule type" value="mRNA"/>
</dbReference>
<dbReference type="CCDS" id="CCDS19840.1"/>
<dbReference type="RefSeq" id="NP_082655.1">
    <property type="nucleotide sequence ID" value="NM_028379.5"/>
</dbReference>
<dbReference type="RefSeq" id="XP_006504794.1">
    <property type="nucleotide sequence ID" value="XM_006504731.1"/>
</dbReference>
<dbReference type="RefSeq" id="XP_006504796.1">
    <property type="nucleotide sequence ID" value="XM_006504733.3"/>
</dbReference>
<dbReference type="RefSeq" id="XP_006504797.1">
    <property type="nucleotide sequence ID" value="XM_006504734.3"/>
</dbReference>
<dbReference type="RefSeq" id="XP_006504798.1">
    <property type="nucleotide sequence ID" value="XM_006504735.3"/>
</dbReference>
<dbReference type="RefSeq" id="XP_006504799.1">
    <property type="nucleotide sequence ID" value="XM_006504736.5"/>
</dbReference>
<dbReference type="RefSeq" id="XP_030110694.1">
    <property type="nucleotide sequence ID" value="XM_030254834.2"/>
</dbReference>
<dbReference type="RefSeq" id="XP_030110695.1">
    <property type="nucleotide sequence ID" value="XM_030254835.2"/>
</dbReference>
<dbReference type="RefSeq" id="XP_036021428.1">
    <property type="nucleotide sequence ID" value="XM_036165535.1"/>
</dbReference>
<dbReference type="RefSeq" id="XP_036021429.1">
    <property type="nucleotide sequence ID" value="XM_036165536.1"/>
</dbReference>
<dbReference type="SMR" id="Q9D6H5"/>
<dbReference type="FunCoup" id="Q9D6H5">
    <property type="interactions" value="1714"/>
</dbReference>
<dbReference type="IntAct" id="Q9D6H5">
    <property type="interactions" value="1"/>
</dbReference>
<dbReference type="MINT" id="Q9D6H5"/>
<dbReference type="STRING" id="10090.ENSMUSP00000001900"/>
<dbReference type="PhosphoSitePlus" id="Q9D6H5"/>
<dbReference type="SwissPalm" id="Q9D6H5"/>
<dbReference type="jPOST" id="Q9D6H5"/>
<dbReference type="PaxDb" id="10090-ENSMUSP00000001900"/>
<dbReference type="PeptideAtlas" id="Q9D6H5"/>
<dbReference type="ProteomicsDB" id="274975"/>
<dbReference type="Pumba" id="Q9D6H5"/>
<dbReference type="Antibodypedia" id="24908">
    <property type="antibodies" value="49 antibodies from 16 providers"/>
</dbReference>
<dbReference type="Ensembl" id="ENSMUST00000001900.9">
    <property type="protein sequence ID" value="ENSMUSP00000001900.3"/>
    <property type="gene ID" value="ENSMUSG00000001844.11"/>
</dbReference>
<dbReference type="Ensembl" id="ENSMUST00000161915.8">
    <property type="protein sequence ID" value="ENSMUSP00000124813.2"/>
    <property type="gene ID" value="ENSMUSG00000001844.11"/>
</dbReference>
<dbReference type="GeneID" id="72881"/>
<dbReference type="KEGG" id="mmu:72881"/>
<dbReference type="UCSC" id="uc009ajz.2">
    <property type="organism name" value="mouse"/>
</dbReference>
<dbReference type="AGR" id="MGI:1920131"/>
<dbReference type="CTD" id="55146"/>
<dbReference type="MGI" id="MGI:1920131">
    <property type="gene designation" value="Zdhhc4"/>
</dbReference>
<dbReference type="VEuPathDB" id="HostDB:ENSMUSG00000001844"/>
<dbReference type="eggNOG" id="KOG1312">
    <property type="taxonomic scope" value="Eukaryota"/>
</dbReference>
<dbReference type="GeneTree" id="ENSGT00920000149163"/>
<dbReference type="HOGENOM" id="CLU_042181_4_0_1"/>
<dbReference type="InParanoid" id="Q9D6H5"/>
<dbReference type="OMA" id="KNMKCST"/>
<dbReference type="OrthoDB" id="331948at2759"/>
<dbReference type="PhylomeDB" id="Q9D6H5"/>
<dbReference type="TreeFam" id="TF330931"/>
<dbReference type="BioGRID-ORCS" id="72881">
    <property type="hits" value="3 hits in 76 CRISPR screens"/>
</dbReference>
<dbReference type="ChiTaRS" id="Zdhhc4">
    <property type="organism name" value="mouse"/>
</dbReference>
<dbReference type="PRO" id="PR:Q9D6H5"/>
<dbReference type="Proteomes" id="UP000000589">
    <property type="component" value="Chromosome 5"/>
</dbReference>
<dbReference type="RNAct" id="Q9D6H5">
    <property type="molecule type" value="protein"/>
</dbReference>
<dbReference type="Bgee" id="ENSMUSG00000001844">
    <property type="expression patterns" value="Expressed in spermatocyte and 251 other cell types or tissues"/>
</dbReference>
<dbReference type="ExpressionAtlas" id="Q9D6H5">
    <property type="expression patterns" value="baseline and differential"/>
</dbReference>
<dbReference type="GO" id="GO:0005783">
    <property type="term" value="C:endoplasmic reticulum"/>
    <property type="evidence" value="ECO:0000250"/>
    <property type="project" value="UniProtKB"/>
</dbReference>
<dbReference type="GO" id="GO:0005789">
    <property type="term" value="C:endoplasmic reticulum membrane"/>
    <property type="evidence" value="ECO:0007669"/>
    <property type="project" value="UniProtKB-SubCell"/>
</dbReference>
<dbReference type="GO" id="GO:0000139">
    <property type="term" value="C:Golgi membrane"/>
    <property type="evidence" value="ECO:0007669"/>
    <property type="project" value="UniProtKB-SubCell"/>
</dbReference>
<dbReference type="GO" id="GO:0005886">
    <property type="term" value="C:plasma membrane"/>
    <property type="evidence" value="ECO:0007669"/>
    <property type="project" value="UniProtKB-SubCell"/>
</dbReference>
<dbReference type="GO" id="GO:0019706">
    <property type="term" value="F:protein-cysteine S-palmitoyltransferase activity"/>
    <property type="evidence" value="ECO:0007669"/>
    <property type="project" value="UniProtKB-EC"/>
</dbReference>
<dbReference type="GO" id="GO:0045089">
    <property type="term" value="P:positive regulation of innate immune response"/>
    <property type="evidence" value="ECO:0007669"/>
    <property type="project" value="Ensembl"/>
</dbReference>
<dbReference type="GO" id="GO:0072659">
    <property type="term" value="P:protein localization to plasma membrane"/>
    <property type="evidence" value="ECO:0007669"/>
    <property type="project" value="Ensembl"/>
</dbReference>
<dbReference type="InterPro" id="IPR001594">
    <property type="entry name" value="Palmitoyltrfase_DHHC"/>
</dbReference>
<dbReference type="InterPro" id="IPR039859">
    <property type="entry name" value="PFA4/ZDH16/20/ERF2-like"/>
</dbReference>
<dbReference type="PANTHER" id="PTHR22883:SF466">
    <property type="entry name" value="PALMITOYLTRANSFERASE ZDHHC4"/>
    <property type="match status" value="1"/>
</dbReference>
<dbReference type="PANTHER" id="PTHR22883">
    <property type="entry name" value="ZINC FINGER DHHC DOMAIN CONTAINING PROTEIN"/>
    <property type="match status" value="1"/>
</dbReference>
<dbReference type="Pfam" id="PF01529">
    <property type="entry name" value="DHHC"/>
    <property type="match status" value="1"/>
</dbReference>
<dbReference type="PROSITE" id="PS50216">
    <property type="entry name" value="DHHC"/>
    <property type="match status" value="1"/>
</dbReference>
<accession>Q9D6H5</accession>
<accession>Q8R5E0</accession>
<name>ZDHC4_MOUSE</name>
<keyword id="KW-0012">Acyltransferase</keyword>
<keyword id="KW-1003">Cell membrane</keyword>
<keyword id="KW-0256">Endoplasmic reticulum</keyword>
<keyword id="KW-0333">Golgi apparatus</keyword>
<keyword id="KW-0449">Lipoprotein</keyword>
<keyword id="KW-0472">Membrane</keyword>
<keyword id="KW-0564">Palmitate</keyword>
<keyword id="KW-1185">Reference proteome</keyword>
<keyword id="KW-0808">Transferase</keyword>
<keyword id="KW-0812">Transmembrane</keyword>
<keyword id="KW-1133">Transmembrane helix</keyword>
<comment type="function">
    <text evidence="2">Palmitoyltransferase that could catalyze the addition of palmitate onto protein substrates including the D(2) dopamine receptor DRD2, GSK3B or MAVS. Mediates GSK3B palmitoylation to prevent its AKT1-mediated phosphorylation leading to activation of the STAT3 signaling pathway. Also catalyzes MAVS palmitoylation which promotes its stabilization and activation by inhibiting 'Lys-48'- but facilitating 'Lys-63'-linked ubiquitination.</text>
</comment>
<comment type="catalytic activity">
    <reaction evidence="2">
        <text>L-cysteinyl-[protein] + hexadecanoyl-CoA = S-hexadecanoyl-L-cysteinyl-[protein] + CoA</text>
        <dbReference type="Rhea" id="RHEA:36683"/>
        <dbReference type="Rhea" id="RHEA-COMP:10131"/>
        <dbReference type="Rhea" id="RHEA-COMP:11032"/>
        <dbReference type="ChEBI" id="CHEBI:29950"/>
        <dbReference type="ChEBI" id="CHEBI:57287"/>
        <dbReference type="ChEBI" id="CHEBI:57379"/>
        <dbReference type="ChEBI" id="CHEBI:74151"/>
        <dbReference type="EC" id="2.3.1.225"/>
    </reaction>
    <physiologicalReaction direction="left-to-right" evidence="2">
        <dbReference type="Rhea" id="RHEA:36684"/>
    </physiologicalReaction>
</comment>
<comment type="subunit">
    <text evidence="2">Interacts with CPT1A.</text>
</comment>
<comment type="subcellular location">
    <subcellularLocation>
        <location evidence="2">Endoplasmic reticulum membrane</location>
        <topology evidence="3">Multi-pass membrane protein</topology>
    </subcellularLocation>
    <subcellularLocation>
        <location evidence="2">Golgi apparatus membrane</location>
        <topology evidence="3">Multi-pass membrane protein</topology>
    </subcellularLocation>
    <subcellularLocation>
        <location evidence="2">Cell membrane</location>
        <topology evidence="3">Multi-pass membrane protein</topology>
    </subcellularLocation>
</comment>
<comment type="domain">
    <text evidence="2">The C-terminal di-lysine motif confers endoplasmic reticulum localization.</text>
</comment>
<comment type="domain">
    <text evidence="1">The DHHC domain is required for palmitoyltransferase activity.</text>
</comment>
<comment type="similarity">
    <text evidence="5">Belongs to the DHHC palmitoyltransferase family.</text>
</comment>
<proteinExistence type="evidence at transcript level"/>
<protein>
    <recommendedName>
        <fullName evidence="5">Palmitoyltransferase ZDHHC4</fullName>
        <ecNumber evidence="2">2.3.1.225</ecNumber>
    </recommendedName>
    <alternativeName>
        <fullName evidence="6">Zinc finger DHHC domain-containing protein 4</fullName>
        <shortName>DHHC-4</shortName>
    </alternativeName>
</protein>
<sequence length="343" mass="39528">MDFLVLFLFYLAFLLICVVLICIFTKSQRLKAVVLGGAQVCSRVIPQCLQRAVQTLLHQLFHTRHPTFIVLHLLLQGLVYAEYTCEVFGYCRELEFSLPYLLLPYVLLSVNLVFFTLTCAANPGTITKANESFLLQVYKFDDVMFPKNSRCPTCDLRKPARSKHCRLCDRCVHRFDHHCVWVNNCIGAWNTRYFLIYLLTLTASAATIATVTAAFLLRLVTVSDLYQETYLDDVGHFQAVDTVFLIQHLFLAFPRIVFLLGFVIVLSMLLAGYLCFALYLAATNQTTNEWYKGDWAWCQRWPLVAWSPSAEPRIHQNIHSHGFRSNLREIFLPATPSYKKKEK</sequence>
<feature type="chain" id="PRO_0000212866" description="Palmitoyltransferase ZDHHC4">
    <location>
        <begin position="1"/>
        <end position="343"/>
    </location>
</feature>
<feature type="topological domain" description="Lumenal" evidence="5">
    <location>
        <begin position="1"/>
        <end position="2"/>
    </location>
</feature>
<feature type="transmembrane region" description="Helical" evidence="3">
    <location>
        <begin position="3"/>
        <end position="23"/>
    </location>
</feature>
<feature type="topological domain" description="Cytoplasmic" evidence="5">
    <location>
        <begin position="24"/>
        <end position="67"/>
    </location>
</feature>
<feature type="transmembrane region" description="Helical" evidence="3">
    <location>
        <begin position="68"/>
        <end position="88"/>
    </location>
</feature>
<feature type="topological domain" description="Lumenal" evidence="5">
    <location>
        <begin position="89"/>
        <end position="100"/>
    </location>
</feature>
<feature type="transmembrane region" description="Helical" evidence="3">
    <location>
        <begin position="101"/>
        <end position="121"/>
    </location>
</feature>
<feature type="topological domain" description="Cytoplasmic" evidence="5">
    <location>
        <begin position="122"/>
        <end position="193"/>
    </location>
</feature>
<feature type="transmembrane region" description="Helical" evidence="3">
    <location>
        <begin position="194"/>
        <end position="214"/>
    </location>
</feature>
<feature type="topological domain" description="Lumenal" evidence="5">
    <location>
        <begin position="215"/>
        <end position="255"/>
    </location>
</feature>
<feature type="transmembrane region" description="Helical" evidence="3">
    <location>
        <begin position="256"/>
        <end position="276"/>
    </location>
</feature>
<feature type="topological domain" description="Cytoplasmic" evidence="5">
    <location>
        <begin position="277"/>
        <end position="343"/>
    </location>
</feature>
<feature type="domain" description="DHHC" evidence="4">
    <location>
        <begin position="149"/>
        <end position="199"/>
    </location>
</feature>
<feature type="short sequence motif" description="Di-lysine motif" evidence="2">
    <location>
        <begin position="340"/>
        <end position="343"/>
    </location>
</feature>
<feature type="active site" description="S-palmitoyl cysteine intermediate" evidence="4">
    <location>
        <position position="179"/>
    </location>
</feature>
<organism>
    <name type="scientific">Mus musculus</name>
    <name type="common">Mouse</name>
    <dbReference type="NCBI Taxonomy" id="10090"/>
    <lineage>
        <taxon>Eukaryota</taxon>
        <taxon>Metazoa</taxon>
        <taxon>Chordata</taxon>
        <taxon>Craniata</taxon>
        <taxon>Vertebrata</taxon>
        <taxon>Euteleostomi</taxon>
        <taxon>Mammalia</taxon>
        <taxon>Eutheria</taxon>
        <taxon>Euarchontoglires</taxon>
        <taxon>Glires</taxon>
        <taxon>Rodentia</taxon>
        <taxon>Myomorpha</taxon>
        <taxon>Muroidea</taxon>
        <taxon>Muridae</taxon>
        <taxon>Murinae</taxon>
        <taxon>Mus</taxon>
        <taxon>Mus</taxon>
    </lineage>
</organism>